<keyword id="KW-0007">Acetylation</keyword>
<keyword id="KW-0020">Allergen</keyword>
<keyword id="KW-0106">Calcium</keyword>
<keyword id="KW-0903">Direct protein sequencing</keyword>
<keyword id="KW-0479">Metal-binding</keyword>
<keyword id="KW-0514">Muscle protein</keyword>
<keyword id="KW-0677">Repeat</keyword>
<dbReference type="SMR" id="P86759"/>
<dbReference type="iPTMnet" id="P86759"/>
<dbReference type="GO" id="GO:0005737">
    <property type="term" value="C:cytoplasm"/>
    <property type="evidence" value="ECO:0007669"/>
    <property type="project" value="TreeGrafter"/>
</dbReference>
<dbReference type="GO" id="GO:0005509">
    <property type="term" value="F:calcium ion binding"/>
    <property type="evidence" value="ECO:0007669"/>
    <property type="project" value="InterPro"/>
</dbReference>
<dbReference type="CDD" id="cd16255">
    <property type="entry name" value="EFh_parvalbumin_beta"/>
    <property type="match status" value="1"/>
</dbReference>
<dbReference type="FunFam" id="1.10.238.10:FF:000060">
    <property type="entry name" value="Parvalbumin, thymic"/>
    <property type="match status" value="1"/>
</dbReference>
<dbReference type="Gene3D" id="1.10.238.10">
    <property type="entry name" value="EF-hand"/>
    <property type="match status" value="1"/>
</dbReference>
<dbReference type="InterPro" id="IPR011992">
    <property type="entry name" value="EF-hand-dom_pair"/>
</dbReference>
<dbReference type="InterPro" id="IPR018247">
    <property type="entry name" value="EF_Hand_1_Ca_BS"/>
</dbReference>
<dbReference type="InterPro" id="IPR002048">
    <property type="entry name" value="EF_hand_dom"/>
</dbReference>
<dbReference type="InterPro" id="IPR008080">
    <property type="entry name" value="Parvalbumin"/>
</dbReference>
<dbReference type="PANTHER" id="PTHR11653:SF12">
    <property type="entry name" value="PARVALBUMIN"/>
    <property type="match status" value="1"/>
</dbReference>
<dbReference type="PANTHER" id="PTHR11653">
    <property type="entry name" value="PARVALBUMIN ALPHA"/>
    <property type="match status" value="1"/>
</dbReference>
<dbReference type="Pfam" id="PF13499">
    <property type="entry name" value="EF-hand_7"/>
    <property type="match status" value="1"/>
</dbReference>
<dbReference type="PRINTS" id="PR01697">
    <property type="entry name" value="PARVALBUMIN"/>
</dbReference>
<dbReference type="SMART" id="SM00054">
    <property type="entry name" value="EFh"/>
    <property type="match status" value="2"/>
</dbReference>
<dbReference type="SUPFAM" id="SSF47473">
    <property type="entry name" value="EF-hand"/>
    <property type="match status" value="1"/>
</dbReference>
<dbReference type="PROSITE" id="PS00018">
    <property type="entry name" value="EF_HAND_1"/>
    <property type="match status" value="2"/>
</dbReference>
<dbReference type="PROSITE" id="PS50222">
    <property type="entry name" value="EF_HAND_2"/>
    <property type="match status" value="2"/>
</dbReference>
<protein>
    <recommendedName>
        <fullName evidence="7">Parvalbumin beta 2</fullName>
    </recommendedName>
</protein>
<reference evidence="8" key="1">
    <citation type="journal article" date="2010" name="J. Proteome Res.">
        <title>Extensive de novo sequencing of new parvalbumin isoforms using a novel combination of bottom-up proteomics, accurate molecular mass measurement by FTICR-MS, and selected MS/MS ion monitoring.</title>
        <authorList>
            <person name="Carrera M."/>
            <person name="Canas B."/>
            <person name="Vazquez J."/>
            <person name="Gallardo J.M."/>
        </authorList>
    </citation>
    <scope>PROTEIN SEQUENCE</scope>
    <scope>MASS SPECTROMETRY</scope>
    <scope>ACETYLATION AT ALA-1</scope>
    <source>
        <tissue evidence="6">Muscle</tissue>
    </source>
</reference>
<organism>
    <name type="scientific">Merluccius gayi</name>
    <name type="common">South Pacific hake</name>
    <name type="synonym">Merluccius gayi peruanus</name>
    <dbReference type="NCBI Taxonomy" id="89948"/>
    <lineage>
        <taxon>Eukaryota</taxon>
        <taxon>Metazoa</taxon>
        <taxon>Chordata</taxon>
        <taxon>Craniata</taxon>
        <taxon>Vertebrata</taxon>
        <taxon>Euteleostomi</taxon>
        <taxon>Actinopterygii</taxon>
        <taxon>Neopterygii</taxon>
        <taxon>Teleostei</taxon>
        <taxon>Neoteleostei</taxon>
        <taxon>Acanthomorphata</taxon>
        <taxon>Zeiogadaria</taxon>
        <taxon>Gadariae</taxon>
        <taxon>Gadiformes</taxon>
        <taxon>Gadoidei</taxon>
        <taxon>Merlucciidae</taxon>
        <taxon>Merluccius</taxon>
    </lineage>
</organism>
<comment type="function">
    <text evidence="2 3">In muscle, parvalbumin is thought to be involved in relaxation after contraction. It binds two calcium ions (By similarity).</text>
</comment>
<comment type="mass spectrometry" mass="11354.81" error="0.0201" method="Electrospray" evidence="6"/>
<comment type="miscellaneous">
    <text evidence="2 6">Is regarded as an important allergen.</text>
</comment>
<comment type="miscellaneous">
    <text evidence="6">On the 2D-gel the determined pI of this protein is: 4.27, its MW is: 11.53 kDa.</text>
</comment>
<comment type="similarity">
    <text evidence="4">Belongs to the parvalbumin family.</text>
</comment>
<name>PRVB2_MERGA</name>
<feature type="chain" id="PRO_0000399419" description="Parvalbumin beta 2">
    <location>
        <begin position="1"/>
        <end position="108"/>
    </location>
</feature>
<feature type="domain" description="EF-hand 1" evidence="5">
    <location>
        <begin position="38"/>
        <end position="73"/>
    </location>
</feature>
<feature type="domain" description="EF-hand 2" evidence="5">
    <location>
        <begin position="77"/>
        <end position="108"/>
    </location>
</feature>
<feature type="binding site" evidence="1 5">
    <location>
        <position position="51"/>
    </location>
    <ligand>
        <name>Ca(2+)</name>
        <dbReference type="ChEBI" id="CHEBI:29108"/>
        <label>1</label>
    </ligand>
</feature>
<feature type="binding site" evidence="1 5">
    <location>
        <position position="53"/>
    </location>
    <ligand>
        <name>Ca(2+)</name>
        <dbReference type="ChEBI" id="CHEBI:29108"/>
        <label>1</label>
    </ligand>
</feature>
<feature type="binding site" evidence="1 5">
    <location>
        <position position="55"/>
    </location>
    <ligand>
        <name>Ca(2+)</name>
        <dbReference type="ChEBI" id="CHEBI:29108"/>
        <label>1</label>
    </ligand>
</feature>
<feature type="binding site" evidence="1">
    <location>
        <position position="57"/>
    </location>
    <ligand>
        <name>Ca(2+)</name>
        <dbReference type="ChEBI" id="CHEBI:29108"/>
        <label>1</label>
    </ligand>
</feature>
<feature type="binding site" evidence="1">
    <location>
        <position position="59"/>
    </location>
    <ligand>
        <name>Ca(2+)</name>
        <dbReference type="ChEBI" id="CHEBI:29108"/>
        <label>1</label>
    </ligand>
</feature>
<feature type="binding site" evidence="1 5">
    <location>
        <position position="62"/>
    </location>
    <ligand>
        <name>Ca(2+)</name>
        <dbReference type="ChEBI" id="CHEBI:29108"/>
        <label>1</label>
    </ligand>
</feature>
<feature type="binding site" evidence="1 5">
    <location>
        <position position="90"/>
    </location>
    <ligand>
        <name>Ca(2+)</name>
        <dbReference type="ChEBI" id="CHEBI:29108"/>
        <label>2</label>
    </ligand>
</feature>
<feature type="binding site" evidence="1 5">
    <location>
        <position position="92"/>
    </location>
    <ligand>
        <name>Ca(2+)</name>
        <dbReference type="ChEBI" id="CHEBI:29108"/>
        <label>2</label>
    </ligand>
</feature>
<feature type="binding site" evidence="1 5">
    <location>
        <position position="94"/>
    </location>
    <ligand>
        <name>Ca(2+)</name>
        <dbReference type="ChEBI" id="CHEBI:29108"/>
        <label>2</label>
    </ligand>
</feature>
<feature type="binding site" evidence="1">
    <location>
        <position position="96"/>
    </location>
    <ligand>
        <name>Ca(2+)</name>
        <dbReference type="ChEBI" id="CHEBI:29108"/>
        <label>2</label>
    </ligand>
</feature>
<feature type="binding site" evidence="1 5">
    <location>
        <position position="101"/>
    </location>
    <ligand>
        <name>Ca(2+)</name>
        <dbReference type="ChEBI" id="CHEBI:29108"/>
        <label>2</label>
    </ligand>
</feature>
<feature type="modified residue" description="N-acetylalanine" evidence="6">
    <location>
        <position position="1"/>
    </location>
</feature>
<feature type="unsure residue" description="I or L" evidence="6">
    <location>
        <position position="5"/>
    </location>
</feature>
<feature type="unsure residue" description="L or I" evidence="6">
    <location>
        <position position="6"/>
    </location>
</feature>
<feature type="unsure residue" description="I or L" evidence="6">
    <location>
        <position position="11"/>
    </location>
</feature>
<feature type="unsure residue" description="L or I" evidence="6">
    <location>
        <position position="15"/>
    </location>
</feature>
<feature type="unsure residue" description="K or Q" evidence="6">
    <location>
        <position position="16"/>
    </location>
</feature>
<feature type="unsure residue" description="K or Q" evidence="6">
    <location>
        <position position="27"/>
    </location>
</feature>
<feature type="unsure residue" description="K or Q" evidence="6">
    <location>
        <position position="32"/>
    </location>
</feature>
<feature type="unsure residue" description="L or I" evidence="6">
    <location>
        <position position="35"/>
    </location>
</feature>
<feature type="unsure residue" description="K or Q" evidence="6">
    <location>
        <position position="38"/>
    </location>
</feature>
<feature type="unsure residue" description="I or L" evidence="6">
    <location>
        <position position="43"/>
    </location>
</feature>
<feature type="unsure residue" description="K or Q" evidence="6">
    <location>
        <position position="44"/>
    </location>
</feature>
<feature type="unsure residue" description="K or Q" evidence="6">
    <location>
        <position position="45"/>
    </location>
</feature>
<feature type="unsure residue" description="I or L" evidence="6">
    <location>
        <position position="50"/>
    </location>
</feature>
<feature type="unsure residue" description="Q or K" evidence="6">
    <location>
        <position position="52"/>
    </location>
</feature>
<feature type="unsure residue" description="K or Q" evidence="6">
    <location>
        <position position="54"/>
    </location>
</feature>
<feature type="unsure residue" description="I or L" evidence="6">
    <location>
        <position position="58"/>
    </location>
</feature>
<feature type="unsure residue" description="L or I" evidence="6">
    <location>
        <position position="63"/>
    </location>
</feature>
<feature type="unsure residue" description="K or Q" evidence="6">
    <location>
        <position position="64"/>
    </location>
</feature>
<feature type="unsure residue" description="L or I" evidence="6">
    <location>
        <position position="65"/>
    </location>
</feature>
<feature type="unsure residue" description="L or I" evidence="6">
    <location>
        <position position="67"/>
    </location>
</feature>
<feature type="unsure residue" description="Q or K" evidence="6">
    <location>
        <position position="68"/>
    </location>
</feature>
<feature type="unsure residue" description="L or I" evidence="6">
    <location>
        <position position="77"/>
    </location>
</feature>
<feature type="unsure residue" description="K or Q" evidence="6">
    <location>
        <position position="83"/>
    </location>
</feature>
<feature type="unsure residue" description="L or I" evidence="6">
    <location>
        <position position="86"/>
    </location>
</feature>
<feature type="unsure residue" description="K or Q" evidence="6">
    <location>
        <position position="87"/>
    </location>
</feature>
<feature type="unsure residue" description="I or L" evidence="6">
    <location>
        <position position="97"/>
    </location>
</feature>
<feature type="unsure residue" description="L or I" evidence="6">
    <location>
        <position position="105"/>
    </location>
</feature>
<feature type="unsure residue" description="K or Q" evidence="6">
    <location>
        <position position="107"/>
    </location>
</feature>
<evidence type="ECO:0000250" key="1">
    <source>
        <dbReference type="UniProtKB" id="P02621"/>
    </source>
</evidence>
<evidence type="ECO:0000250" key="2">
    <source>
        <dbReference type="UniProtKB" id="P02622"/>
    </source>
</evidence>
<evidence type="ECO:0000250" key="3">
    <source>
        <dbReference type="UniProtKB" id="P02624"/>
    </source>
</evidence>
<evidence type="ECO:0000255" key="4"/>
<evidence type="ECO:0000255" key="5">
    <source>
        <dbReference type="PROSITE-ProRule" id="PRU00448"/>
    </source>
</evidence>
<evidence type="ECO:0000269" key="6">
    <source>
    </source>
</evidence>
<evidence type="ECO:0000303" key="7">
    <source>
    </source>
</evidence>
<evidence type="ECO:0000305" key="8"/>
<accession>P86759</accession>
<sequence length="108" mass="11320">AFSGILAEADIAAALKACEAADSFNYKAFFAKVGLSAKSADDIKKAFFVIDQDKSGFIEEDELKLFLQVFSAGARALTDAETKAFLKAGDSDGDGAIGVDEFAVLVKA</sequence>
<proteinExistence type="evidence at protein level"/>